<reference key="1">
    <citation type="journal article" date="2005" name="Science">
        <title>The transcriptional landscape of the mammalian genome.</title>
        <authorList>
            <person name="Carninci P."/>
            <person name="Kasukawa T."/>
            <person name="Katayama S."/>
            <person name="Gough J."/>
            <person name="Frith M.C."/>
            <person name="Maeda N."/>
            <person name="Oyama R."/>
            <person name="Ravasi T."/>
            <person name="Lenhard B."/>
            <person name="Wells C."/>
            <person name="Kodzius R."/>
            <person name="Shimokawa K."/>
            <person name="Bajic V.B."/>
            <person name="Brenner S.E."/>
            <person name="Batalov S."/>
            <person name="Forrest A.R."/>
            <person name="Zavolan M."/>
            <person name="Davis M.J."/>
            <person name="Wilming L.G."/>
            <person name="Aidinis V."/>
            <person name="Allen J.E."/>
            <person name="Ambesi-Impiombato A."/>
            <person name="Apweiler R."/>
            <person name="Aturaliya R.N."/>
            <person name="Bailey T.L."/>
            <person name="Bansal M."/>
            <person name="Baxter L."/>
            <person name="Beisel K.W."/>
            <person name="Bersano T."/>
            <person name="Bono H."/>
            <person name="Chalk A.M."/>
            <person name="Chiu K.P."/>
            <person name="Choudhary V."/>
            <person name="Christoffels A."/>
            <person name="Clutterbuck D.R."/>
            <person name="Crowe M.L."/>
            <person name="Dalla E."/>
            <person name="Dalrymple B.P."/>
            <person name="de Bono B."/>
            <person name="Della Gatta G."/>
            <person name="di Bernardo D."/>
            <person name="Down T."/>
            <person name="Engstrom P."/>
            <person name="Fagiolini M."/>
            <person name="Faulkner G."/>
            <person name="Fletcher C.F."/>
            <person name="Fukushima T."/>
            <person name="Furuno M."/>
            <person name="Futaki S."/>
            <person name="Gariboldi M."/>
            <person name="Georgii-Hemming P."/>
            <person name="Gingeras T.R."/>
            <person name="Gojobori T."/>
            <person name="Green R.E."/>
            <person name="Gustincich S."/>
            <person name="Harbers M."/>
            <person name="Hayashi Y."/>
            <person name="Hensch T.K."/>
            <person name="Hirokawa N."/>
            <person name="Hill D."/>
            <person name="Huminiecki L."/>
            <person name="Iacono M."/>
            <person name="Ikeo K."/>
            <person name="Iwama A."/>
            <person name="Ishikawa T."/>
            <person name="Jakt M."/>
            <person name="Kanapin A."/>
            <person name="Katoh M."/>
            <person name="Kawasawa Y."/>
            <person name="Kelso J."/>
            <person name="Kitamura H."/>
            <person name="Kitano H."/>
            <person name="Kollias G."/>
            <person name="Krishnan S.P."/>
            <person name="Kruger A."/>
            <person name="Kummerfeld S.K."/>
            <person name="Kurochkin I.V."/>
            <person name="Lareau L.F."/>
            <person name="Lazarevic D."/>
            <person name="Lipovich L."/>
            <person name="Liu J."/>
            <person name="Liuni S."/>
            <person name="McWilliam S."/>
            <person name="Madan Babu M."/>
            <person name="Madera M."/>
            <person name="Marchionni L."/>
            <person name="Matsuda H."/>
            <person name="Matsuzawa S."/>
            <person name="Miki H."/>
            <person name="Mignone F."/>
            <person name="Miyake S."/>
            <person name="Morris K."/>
            <person name="Mottagui-Tabar S."/>
            <person name="Mulder N."/>
            <person name="Nakano N."/>
            <person name="Nakauchi H."/>
            <person name="Ng P."/>
            <person name="Nilsson R."/>
            <person name="Nishiguchi S."/>
            <person name="Nishikawa S."/>
            <person name="Nori F."/>
            <person name="Ohara O."/>
            <person name="Okazaki Y."/>
            <person name="Orlando V."/>
            <person name="Pang K.C."/>
            <person name="Pavan W.J."/>
            <person name="Pavesi G."/>
            <person name="Pesole G."/>
            <person name="Petrovsky N."/>
            <person name="Piazza S."/>
            <person name="Reed J."/>
            <person name="Reid J.F."/>
            <person name="Ring B.Z."/>
            <person name="Ringwald M."/>
            <person name="Rost B."/>
            <person name="Ruan Y."/>
            <person name="Salzberg S.L."/>
            <person name="Sandelin A."/>
            <person name="Schneider C."/>
            <person name="Schoenbach C."/>
            <person name="Sekiguchi K."/>
            <person name="Semple C.A."/>
            <person name="Seno S."/>
            <person name="Sessa L."/>
            <person name="Sheng Y."/>
            <person name="Shibata Y."/>
            <person name="Shimada H."/>
            <person name="Shimada K."/>
            <person name="Silva D."/>
            <person name="Sinclair B."/>
            <person name="Sperling S."/>
            <person name="Stupka E."/>
            <person name="Sugiura K."/>
            <person name="Sultana R."/>
            <person name="Takenaka Y."/>
            <person name="Taki K."/>
            <person name="Tammoja K."/>
            <person name="Tan S.L."/>
            <person name="Tang S."/>
            <person name="Taylor M.S."/>
            <person name="Tegner J."/>
            <person name="Teichmann S.A."/>
            <person name="Ueda H.R."/>
            <person name="van Nimwegen E."/>
            <person name="Verardo R."/>
            <person name="Wei C.L."/>
            <person name="Yagi K."/>
            <person name="Yamanishi H."/>
            <person name="Zabarovsky E."/>
            <person name="Zhu S."/>
            <person name="Zimmer A."/>
            <person name="Hide W."/>
            <person name="Bult C."/>
            <person name="Grimmond S.M."/>
            <person name="Teasdale R.D."/>
            <person name="Liu E.T."/>
            <person name="Brusic V."/>
            <person name="Quackenbush J."/>
            <person name="Wahlestedt C."/>
            <person name="Mattick J.S."/>
            <person name="Hume D.A."/>
            <person name="Kai C."/>
            <person name="Sasaki D."/>
            <person name="Tomaru Y."/>
            <person name="Fukuda S."/>
            <person name="Kanamori-Katayama M."/>
            <person name="Suzuki M."/>
            <person name="Aoki J."/>
            <person name="Arakawa T."/>
            <person name="Iida J."/>
            <person name="Imamura K."/>
            <person name="Itoh M."/>
            <person name="Kato T."/>
            <person name="Kawaji H."/>
            <person name="Kawagashira N."/>
            <person name="Kawashima T."/>
            <person name="Kojima M."/>
            <person name="Kondo S."/>
            <person name="Konno H."/>
            <person name="Nakano K."/>
            <person name="Ninomiya N."/>
            <person name="Nishio T."/>
            <person name="Okada M."/>
            <person name="Plessy C."/>
            <person name="Shibata K."/>
            <person name="Shiraki T."/>
            <person name="Suzuki S."/>
            <person name="Tagami M."/>
            <person name="Waki K."/>
            <person name="Watahiki A."/>
            <person name="Okamura-Oho Y."/>
            <person name="Suzuki H."/>
            <person name="Kawai J."/>
            <person name="Hayashizaki Y."/>
        </authorList>
    </citation>
    <scope>NUCLEOTIDE SEQUENCE [LARGE SCALE MRNA] (ISOFORMS 1 AND 2)</scope>
    <source>
        <strain>C57BL/6J</strain>
        <tissue>Head</tissue>
        <tissue>Spinal cord</tissue>
    </source>
</reference>
<reference key="2">
    <citation type="journal article" date="2002" name="DNA Res.">
        <title>Prediction of the coding sequences of mouse homologues of KIAA gene: I. The complete nucleotide sequences of 100 mouse KIAA-homologous cDNAs identified by screening of terminal sequences of cDNA clones randomly sampled from size-fractionated libraries.</title>
        <authorList>
            <person name="Okazaki N."/>
            <person name="Kikuno R."/>
            <person name="Ohara R."/>
            <person name="Inamoto S."/>
            <person name="Hara Y."/>
            <person name="Nagase T."/>
            <person name="Ohara O."/>
            <person name="Koga H."/>
        </authorList>
    </citation>
    <scope>NUCLEOTIDE SEQUENCE [LARGE SCALE MRNA] (ISOFORM 2)</scope>
    <source>
        <tissue>Brain</tissue>
    </source>
</reference>
<reference key="3">
    <citation type="journal article" date="2004" name="Genome Res.">
        <title>The status, quality, and expansion of the NIH full-length cDNA project: the Mammalian Gene Collection (MGC).</title>
        <authorList>
            <consortium name="The MGC Project Team"/>
        </authorList>
    </citation>
    <scope>NUCLEOTIDE SEQUENCE [LARGE SCALE MRNA] (ISOFORM 1)</scope>
    <source>
        <strain>FVB/N</strain>
        <tissue>Mammary tumor</tissue>
    </source>
</reference>
<reference key="4">
    <citation type="journal article" date="2010" name="Cell">
        <title>A tissue-specific atlas of mouse protein phosphorylation and expression.</title>
        <authorList>
            <person name="Huttlin E.L."/>
            <person name="Jedrychowski M.P."/>
            <person name="Elias J.E."/>
            <person name="Goswami T."/>
            <person name="Rad R."/>
            <person name="Beausoleil S.A."/>
            <person name="Villen J."/>
            <person name="Haas W."/>
            <person name="Sowa M.E."/>
            <person name="Gygi S.P."/>
        </authorList>
    </citation>
    <scope>IDENTIFICATION BY MASS SPECTROMETRY [LARGE SCALE ANALYSIS]</scope>
    <source>
        <tissue>Brain</tissue>
        <tissue>Brown adipose tissue</tissue>
        <tissue>Kidney</tissue>
        <tissue>Liver</tissue>
        <tissue>Testis</tissue>
    </source>
</reference>
<sequence length="627" mass="72173">MASVAGDSAMEVVPALAEEAAAEATGPSCLVQLPGEVLEYILCSGSLTALDIGRVSSTCRRLREVCQSSGQVWKEQFRVRWPSLMKHYSPTDYVNWLEEYKVRQKAGLEARKIVASFSKRFFSEHVPCNGFSDIENLEGPEIFFEDELVCILNMEGRKALTWKYYAKKILYYLRQQKILNNLKAFLQQPDDYESYLEGAVYIDQYCNPLSDISFRDIQAQIHSIVELVCKTLRGINSRHPSLTFRAGESSMIMEIELQSQVLDAINYVLYDQLKFKGNRMDYYNALNLYMHQVLTRRTGIPISMSLLYLTVARQLGVPLEPVNFPSHFLLRWCQGAEGATLDIFDYIYIDAFGKGKQLTVKECEYLIGQHVTAALYGVVNVKKVLQRMVGNLLSLGKREGIDQSYQLLRDSLDLYLAMYPDQVQLLLLQARLYFHLGIWPEKSFCLVLKVLDILQHIQTLDPGQHGAVGYLVQHTLEHIERKKEEVGVEVKLRSEEKHRDVCYSIGLVMKHKRYGYNCVIYGWDPTCMMGHEWIRNMNVHSLPHGHHQPFYNVLVEDGSCRYAAQENLEYNVEPQEISHPDVGRYFSEFTGTHYIPNAELEIRYPEDLEFVYETVQNIYSAKEDTAE</sequence>
<accession>Q8VDH1</accession>
<accession>Q8BHA5</accession>
<accession>Q8CHC6</accession>
<proteinExistence type="evidence at protein level"/>
<gene>
    <name type="primary">Fbxo21</name>
    <name type="synonym">Fbx21</name>
    <name type="synonym">Kiaa0875</name>
</gene>
<name>FBX21_MOUSE</name>
<keyword id="KW-0025">Alternative splicing</keyword>
<keyword id="KW-1185">Reference proteome</keyword>
<keyword id="KW-0833">Ubl conjugation pathway</keyword>
<organism>
    <name type="scientific">Mus musculus</name>
    <name type="common">Mouse</name>
    <dbReference type="NCBI Taxonomy" id="10090"/>
    <lineage>
        <taxon>Eukaryota</taxon>
        <taxon>Metazoa</taxon>
        <taxon>Chordata</taxon>
        <taxon>Craniata</taxon>
        <taxon>Vertebrata</taxon>
        <taxon>Euteleostomi</taxon>
        <taxon>Mammalia</taxon>
        <taxon>Eutheria</taxon>
        <taxon>Euarchontoglires</taxon>
        <taxon>Glires</taxon>
        <taxon>Rodentia</taxon>
        <taxon>Myomorpha</taxon>
        <taxon>Muroidea</taxon>
        <taxon>Muridae</taxon>
        <taxon>Murinae</taxon>
        <taxon>Mus</taxon>
        <taxon>Mus</taxon>
    </lineage>
</organism>
<dbReference type="EMBL" id="AK048131">
    <property type="protein sequence ID" value="BAC33252.1"/>
    <property type="molecule type" value="mRNA"/>
</dbReference>
<dbReference type="EMBL" id="AK048542">
    <property type="protein sequence ID" value="BAC33369.1"/>
    <property type="molecule type" value="mRNA"/>
</dbReference>
<dbReference type="EMBL" id="AK049723">
    <property type="protein sequence ID" value="BAC33894.1"/>
    <property type="molecule type" value="mRNA"/>
</dbReference>
<dbReference type="EMBL" id="AB093270">
    <property type="protein sequence ID" value="BAC41454.1"/>
    <property type="status" value="ALT_INIT"/>
    <property type="molecule type" value="mRNA"/>
</dbReference>
<dbReference type="EMBL" id="BC021871">
    <property type="protein sequence ID" value="AAH21871.1"/>
    <property type="molecule type" value="mRNA"/>
</dbReference>
<dbReference type="CCDS" id="CCDS19607.1">
    <molecule id="Q8VDH1-1"/>
</dbReference>
<dbReference type="CCDS" id="CCDS84947.1">
    <molecule id="Q8VDH1-2"/>
</dbReference>
<dbReference type="RefSeq" id="NP_001333517.1">
    <molecule id="Q8VDH1-2"/>
    <property type="nucleotide sequence ID" value="NM_001346588.1"/>
</dbReference>
<dbReference type="RefSeq" id="NP_663539.1">
    <molecule id="Q8VDH1-1"/>
    <property type="nucleotide sequence ID" value="NM_145564.4"/>
</dbReference>
<dbReference type="BioGRID" id="231154">
    <property type="interactions" value="30"/>
</dbReference>
<dbReference type="FunCoup" id="Q8VDH1">
    <property type="interactions" value="63"/>
</dbReference>
<dbReference type="IntAct" id="Q8VDH1">
    <property type="interactions" value="26"/>
</dbReference>
<dbReference type="STRING" id="10090.ENSMUSP00000143873"/>
<dbReference type="iPTMnet" id="Q8VDH1"/>
<dbReference type="PhosphoSitePlus" id="Q8VDH1"/>
<dbReference type="SwissPalm" id="Q8VDH1"/>
<dbReference type="PaxDb" id="10090-ENSMUSP00000035506"/>
<dbReference type="PeptideAtlas" id="Q8VDH1"/>
<dbReference type="ProteomicsDB" id="271882">
    <molecule id="Q8VDH1-1"/>
</dbReference>
<dbReference type="ProteomicsDB" id="271883">
    <molecule id="Q8VDH1-2"/>
</dbReference>
<dbReference type="Pumba" id="Q8VDH1"/>
<dbReference type="Antibodypedia" id="31332">
    <property type="antibodies" value="311 antibodies from 23 providers"/>
</dbReference>
<dbReference type="Ensembl" id="ENSMUST00000035579.10">
    <molecule id="Q8VDH1-2"/>
    <property type="protein sequence ID" value="ENSMUSP00000035506.8"/>
    <property type="gene ID" value="ENSMUSG00000032898.10"/>
</dbReference>
<dbReference type="Ensembl" id="ENSMUST00000202447.4">
    <molecule id="Q8VDH1-1"/>
    <property type="protein sequence ID" value="ENSMUSP00000143873.2"/>
    <property type="gene ID" value="ENSMUSG00000032898.10"/>
</dbReference>
<dbReference type="GeneID" id="231670"/>
<dbReference type="KEGG" id="mmu:231670"/>
<dbReference type="UCSC" id="uc008zga.1">
    <molecule id="Q8VDH1-1"/>
    <property type="organism name" value="mouse"/>
</dbReference>
<dbReference type="UCSC" id="uc008zgb.1">
    <molecule id="Q8VDH1-2"/>
    <property type="organism name" value="mouse"/>
</dbReference>
<dbReference type="AGR" id="MGI:1924223"/>
<dbReference type="CTD" id="23014"/>
<dbReference type="MGI" id="MGI:1924223">
    <property type="gene designation" value="Fbxo21"/>
</dbReference>
<dbReference type="VEuPathDB" id="HostDB:ENSMUSG00000032898"/>
<dbReference type="eggNOG" id="ENOG502QS7Z">
    <property type="taxonomic scope" value="Eukaryota"/>
</dbReference>
<dbReference type="GeneTree" id="ENSGT00390000005653"/>
<dbReference type="InParanoid" id="Q8VDH1"/>
<dbReference type="OMA" id="KQPFYNV"/>
<dbReference type="OrthoDB" id="28868at2759"/>
<dbReference type="PhylomeDB" id="Q8VDH1"/>
<dbReference type="TreeFam" id="TF313177"/>
<dbReference type="Reactome" id="R-MMU-8951664">
    <property type="pathway name" value="Neddylation"/>
</dbReference>
<dbReference type="Reactome" id="R-MMU-983168">
    <property type="pathway name" value="Antigen processing: Ubiquitination &amp; Proteasome degradation"/>
</dbReference>
<dbReference type="BioGRID-ORCS" id="231670">
    <property type="hits" value="3 hits in 77 CRISPR screens"/>
</dbReference>
<dbReference type="ChiTaRS" id="Fbxo21">
    <property type="organism name" value="mouse"/>
</dbReference>
<dbReference type="PRO" id="PR:Q8VDH1"/>
<dbReference type="Proteomes" id="UP000000589">
    <property type="component" value="Chromosome 5"/>
</dbReference>
<dbReference type="RNAct" id="Q8VDH1">
    <property type="molecule type" value="protein"/>
</dbReference>
<dbReference type="Bgee" id="ENSMUSG00000032898">
    <property type="expression patterns" value="Expressed in cortical plate and 254 other cell types or tissues"/>
</dbReference>
<dbReference type="ExpressionAtlas" id="Q8VDH1">
    <property type="expression patterns" value="baseline and differential"/>
</dbReference>
<dbReference type="GO" id="GO:0003677">
    <property type="term" value="F:DNA binding"/>
    <property type="evidence" value="ECO:0007669"/>
    <property type="project" value="InterPro"/>
</dbReference>
<dbReference type="GO" id="GO:0006915">
    <property type="term" value="P:apoptotic process"/>
    <property type="evidence" value="ECO:0000315"/>
    <property type="project" value="MGI"/>
</dbReference>
<dbReference type="GO" id="GO:0019221">
    <property type="term" value="P:cytokine-mediated signaling pathway"/>
    <property type="evidence" value="ECO:0000315"/>
    <property type="project" value="MGI"/>
</dbReference>
<dbReference type="GO" id="GO:0070371">
    <property type="term" value="P:ERK1 and ERK2 cascade"/>
    <property type="evidence" value="ECO:0000315"/>
    <property type="project" value="MGI"/>
</dbReference>
<dbReference type="GO" id="GO:0060218">
    <property type="term" value="P:hematopoietic stem cell differentiation"/>
    <property type="evidence" value="ECO:0000315"/>
    <property type="project" value="MGI"/>
</dbReference>
<dbReference type="GO" id="GO:0061484">
    <property type="term" value="P:hematopoietic stem cell homeostasis"/>
    <property type="evidence" value="ECO:0000315"/>
    <property type="project" value="MGI"/>
</dbReference>
<dbReference type="CDD" id="cd22096">
    <property type="entry name" value="F-box_FBXO21"/>
    <property type="match status" value="1"/>
</dbReference>
<dbReference type="Gene3D" id="1.20.1280.50">
    <property type="match status" value="1"/>
</dbReference>
<dbReference type="Gene3D" id="2.30.30.390">
    <property type="entry name" value="Hemimethylated DNA-binding domain"/>
    <property type="match status" value="1"/>
</dbReference>
<dbReference type="InterPro" id="IPR036047">
    <property type="entry name" value="F-box-like_dom_sf"/>
</dbReference>
<dbReference type="InterPro" id="IPR001810">
    <property type="entry name" value="F-box_dom"/>
</dbReference>
<dbReference type="InterPro" id="IPR011722">
    <property type="entry name" value="Hemimethylated_DNA-bd_dom"/>
</dbReference>
<dbReference type="InterPro" id="IPR036623">
    <property type="entry name" value="Hemimethylated_DNA-bd_sf"/>
</dbReference>
<dbReference type="InterPro" id="IPR032698">
    <property type="entry name" value="SirB1_N"/>
</dbReference>
<dbReference type="NCBIfam" id="TIGR02097">
    <property type="entry name" value="yccV"/>
    <property type="match status" value="1"/>
</dbReference>
<dbReference type="PANTHER" id="PTHR31350:SF21">
    <property type="entry name" value="F-BOX ONLY PROTEIN 21"/>
    <property type="match status" value="1"/>
</dbReference>
<dbReference type="PANTHER" id="PTHR31350">
    <property type="entry name" value="SI:DKEY-261L7.2"/>
    <property type="match status" value="1"/>
</dbReference>
<dbReference type="Pfam" id="PF12937">
    <property type="entry name" value="F-box-like"/>
    <property type="match status" value="1"/>
</dbReference>
<dbReference type="Pfam" id="PF13369">
    <property type="entry name" value="Transglut_core2"/>
    <property type="match status" value="1"/>
</dbReference>
<dbReference type="Pfam" id="PF08755">
    <property type="entry name" value="YccV-like"/>
    <property type="match status" value="1"/>
</dbReference>
<dbReference type="SMART" id="SM00992">
    <property type="entry name" value="YccV-like"/>
    <property type="match status" value="1"/>
</dbReference>
<dbReference type="SUPFAM" id="SSF81383">
    <property type="entry name" value="F-box domain"/>
    <property type="match status" value="1"/>
</dbReference>
<dbReference type="SUPFAM" id="SSF141255">
    <property type="entry name" value="YccV-like"/>
    <property type="match status" value="1"/>
</dbReference>
<dbReference type="PROSITE" id="PS50181">
    <property type="entry name" value="FBOX"/>
    <property type="match status" value="1"/>
</dbReference>
<feature type="chain" id="PRO_0000119904" description="F-box only protein 21">
    <location>
        <begin position="1"/>
        <end position="627"/>
    </location>
</feature>
<feature type="domain" description="F-box" evidence="2">
    <location>
        <begin position="27"/>
        <end position="76"/>
    </location>
</feature>
<feature type="splice variant" id="VSP_011350" description="In isoform 2." evidence="3 4">
    <location>
        <begin position="443"/>
        <end position="449"/>
    </location>
</feature>
<feature type="sequence conflict" description="In Ref. 1; BAC33252/BAC33369." evidence="5" ref="1">
    <original>G</original>
    <variation>S</variation>
    <location>
        <position position="396"/>
    </location>
</feature>
<protein>
    <recommendedName>
        <fullName>F-box only protein 21</fullName>
    </recommendedName>
</protein>
<comment type="function">
    <text evidence="1">Substrate-recognition component of the SCF (SKP1-CUL1-F-box protein)-type E3 ubiquitin ligase complex.</text>
</comment>
<comment type="subunit">
    <text evidence="1">Directly interacts with SKP1 and CUL1.</text>
</comment>
<comment type="alternative products">
    <event type="alternative splicing"/>
    <isoform>
        <id>Q8VDH1-1</id>
        <name>1</name>
        <sequence type="displayed"/>
    </isoform>
    <isoform>
        <id>Q8VDH1-2</id>
        <name>2</name>
        <sequence type="described" ref="VSP_011350"/>
    </isoform>
</comment>
<comment type="sequence caution" evidence="5">
    <conflict type="erroneous initiation">
        <sequence resource="EMBL-CDS" id="BAC41454"/>
    </conflict>
</comment>
<evidence type="ECO:0000250" key="1"/>
<evidence type="ECO:0000255" key="2">
    <source>
        <dbReference type="PROSITE-ProRule" id="PRU00080"/>
    </source>
</evidence>
<evidence type="ECO:0000303" key="3">
    <source>
    </source>
</evidence>
<evidence type="ECO:0000303" key="4">
    <source>
    </source>
</evidence>
<evidence type="ECO:0000305" key="5"/>